<feature type="signal peptide" evidence="2">
    <location>
        <begin position="1"/>
        <end position="28"/>
    </location>
</feature>
<feature type="chain" id="PRO_0000367327" description="GDSL esterase/lipase ESM1">
    <location>
        <begin position="29"/>
        <end position="392"/>
    </location>
</feature>
<feature type="active site" description="Nucleophile" evidence="1">
    <location>
        <position position="43"/>
    </location>
</feature>
<feature type="active site" evidence="1">
    <location>
        <position position="324"/>
    </location>
</feature>
<feature type="active site" evidence="1">
    <location>
        <position position="327"/>
    </location>
</feature>
<feature type="glycosylation site" description="N-linked (GlcNAc...) asparagine" evidence="2">
    <location>
        <position position="146"/>
    </location>
</feature>
<feature type="glycosylation site" description="N-linked (GlcNAc...) asparagine" evidence="2">
    <location>
        <position position="166"/>
    </location>
</feature>
<feature type="glycosylation site" description="N-linked (GlcNAc...) asparagine" evidence="2">
    <location>
        <position position="290"/>
    </location>
</feature>
<feature type="sequence variant" description="In strain: cv. Landsberg erecta." evidence="3">
    <original>VS</original>
    <variation>AG</variation>
    <location>
        <begin position="8"/>
        <end position="9"/>
    </location>
</feature>
<feature type="sequence variant" description="In strain: cv. Landsberg erecta." evidence="3">
    <original>A</original>
    <variation>S</variation>
    <location>
        <position position="389"/>
    </location>
</feature>
<feature type="sequence conflict" description="In Ref. 4; AAM47374/AAK96511." evidence="5" ref="4">
    <original>A</original>
    <variation>T</variation>
    <location>
        <position position="271"/>
    </location>
</feature>
<gene>
    <name type="primary">ESM1</name>
    <name type="ordered locus">At3g14210</name>
    <name type="ORF">MAG2.6</name>
</gene>
<name>ESM1_ARATH</name>
<reference key="1">
    <citation type="journal article" date="2006" name="Plant Cell">
        <title>The gene controlling the quantitative trait locus EPITHIOSPECIFIER MODIFIER1 alters glucosinolate hydrolysis and insect resistance in Arabidopsis.</title>
        <authorList>
            <person name="Zhang Z.-Y."/>
            <person name="Ober J.A."/>
            <person name="Kliebenstein D.J."/>
        </authorList>
    </citation>
    <scope>NUCLEOTIDE SEQUENCE [GENOMIC DNA]</scope>
    <scope>FUNCTION</scope>
    <scope>VARIANTS 8-VAL-SER-9 DELINS ALA-GLY AND SER-389</scope>
    <scope>DISRUPTION PHENOTYPE</scope>
    <source>
        <strain>cv. Columbia</strain>
        <strain>cv. Landsberg erecta</strain>
    </source>
</reference>
<reference key="2">
    <citation type="journal article" date="2000" name="DNA Res.">
        <title>Structural analysis of Arabidopsis thaliana chromosome 3. II. Sequence features of the 4,251,695 bp regions covered by 90 P1, TAC and BAC clones.</title>
        <authorList>
            <person name="Kaneko T."/>
            <person name="Katoh T."/>
            <person name="Sato S."/>
            <person name="Nakamura Y."/>
            <person name="Asamizu E."/>
            <person name="Tabata S."/>
        </authorList>
    </citation>
    <scope>NUCLEOTIDE SEQUENCE [LARGE SCALE GENOMIC DNA]</scope>
    <source>
        <strain>cv. Columbia</strain>
    </source>
</reference>
<reference key="3">
    <citation type="journal article" date="2017" name="Plant J.">
        <title>Araport11: a complete reannotation of the Arabidopsis thaliana reference genome.</title>
        <authorList>
            <person name="Cheng C.Y."/>
            <person name="Krishnakumar V."/>
            <person name="Chan A.P."/>
            <person name="Thibaud-Nissen F."/>
            <person name="Schobel S."/>
            <person name="Town C.D."/>
        </authorList>
    </citation>
    <scope>GENOME REANNOTATION</scope>
    <source>
        <strain>cv. Columbia</strain>
    </source>
</reference>
<reference key="4">
    <citation type="journal article" date="2003" name="Science">
        <title>Empirical analysis of transcriptional activity in the Arabidopsis genome.</title>
        <authorList>
            <person name="Yamada K."/>
            <person name="Lim J."/>
            <person name="Dale J.M."/>
            <person name="Chen H."/>
            <person name="Shinn P."/>
            <person name="Palm C.J."/>
            <person name="Southwick A.M."/>
            <person name="Wu H.C."/>
            <person name="Kim C.J."/>
            <person name="Nguyen M."/>
            <person name="Pham P.K."/>
            <person name="Cheuk R.F."/>
            <person name="Karlin-Newmann G."/>
            <person name="Liu S.X."/>
            <person name="Lam B."/>
            <person name="Sakano H."/>
            <person name="Wu T."/>
            <person name="Yu G."/>
            <person name="Miranda M."/>
            <person name="Quach H.L."/>
            <person name="Tripp M."/>
            <person name="Chang C.H."/>
            <person name="Lee J.M."/>
            <person name="Toriumi M.J."/>
            <person name="Chan M.M."/>
            <person name="Tang C.C."/>
            <person name="Onodera C.S."/>
            <person name="Deng J.M."/>
            <person name="Akiyama K."/>
            <person name="Ansari Y."/>
            <person name="Arakawa T."/>
            <person name="Banh J."/>
            <person name="Banno F."/>
            <person name="Bowser L."/>
            <person name="Brooks S.Y."/>
            <person name="Carninci P."/>
            <person name="Chao Q."/>
            <person name="Choy N."/>
            <person name="Enju A."/>
            <person name="Goldsmith A.D."/>
            <person name="Gurjal M."/>
            <person name="Hansen N.F."/>
            <person name="Hayashizaki Y."/>
            <person name="Johnson-Hopson C."/>
            <person name="Hsuan V.W."/>
            <person name="Iida K."/>
            <person name="Karnes M."/>
            <person name="Khan S."/>
            <person name="Koesema E."/>
            <person name="Ishida J."/>
            <person name="Jiang P.X."/>
            <person name="Jones T."/>
            <person name="Kawai J."/>
            <person name="Kamiya A."/>
            <person name="Meyers C."/>
            <person name="Nakajima M."/>
            <person name="Narusaka M."/>
            <person name="Seki M."/>
            <person name="Sakurai T."/>
            <person name="Satou M."/>
            <person name="Tamse R."/>
            <person name="Vaysberg M."/>
            <person name="Wallender E.K."/>
            <person name="Wong C."/>
            <person name="Yamamura Y."/>
            <person name="Yuan S."/>
            <person name="Shinozaki K."/>
            <person name="Davis R.W."/>
            <person name="Theologis A."/>
            <person name="Ecker J.R."/>
        </authorList>
    </citation>
    <scope>NUCLEOTIDE SEQUENCE [LARGE SCALE MRNA]</scope>
    <source>
        <strain>cv. Columbia</strain>
    </source>
</reference>
<reference key="5">
    <citation type="submission" date="2005-03" db="EMBL/GenBank/DDBJ databases">
        <title>Large-scale analysis of RIKEN Arabidopsis full-length (RAFL) cDNAs.</title>
        <authorList>
            <person name="Totoki Y."/>
            <person name="Seki M."/>
            <person name="Ishida J."/>
            <person name="Nakajima M."/>
            <person name="Enju A."/>
            <person name="Kamiya A."/>
            <person name="Narusaka M."/>
            <person name="Shin-i T."/>
            <person name="Nakagawa M."/>
            <person name="Sakamoto N."/>
            <person name="Oishi K."/>
            <person name="Kohara Y."/>
            <person name="Kobayashi M."/>
            <person name="Toyoda A."/>
            <person name="Sakaki Y."/>
            <person name="Sakurai T."/>
            <person name="Iida K."/>
            <person name="Akiyama K."/>
            <person name="Satou M."/>
            <person name="Toyoda T."/>
            <person name="Konagaya A."/>
            <person name="Carninci P."/>
            <person name="Kawai J."/>
            <person name="Hayashizaki Y."/>
            <person name="Shinozaki K."/>
        </authorList>
    </citation>
    <scope>NUCLEOTIDE SEQUENCE [LARGE SCALE MRNA]</scope>
    <source>
        <strain>cv. Columbia</strain>
    </source>
</reference>
<reference key="6">
    <citation type="journal article" date="2007" name="Plant Cell">
        <title>Proteome analysis of Arabidopsis leaf peroxisomes reveals novel targeting peptides, metabolic pathways, and defense mechanisms.</title>
        <authorList>
            <person name="Reumann S."/>
            <person name="Babujee L."/>
            <person name="Ma C."/>
            <person name="Wienkoop S."/>
            <person name="Siemsen T."/>
            <person name="Antonicelli G.E."/>
            <person name="Rasche N."/>
            <person name="Lueder F."/>
            <person name="Weckwerth W."/>
            <person name="Jahn O."/>
        </authorList>
    </citation>
    <scope>IDENTIFICATION BY MASS SPECTROMETRY</scope>
</reference>
<reference key="7">
    <citation type="journal article" date="2004" name="Prog. Lipid Res.">
        <title>GDSL family of serine esterases/lipases.</title>
        <authorList>
            <person name="Akoh C.C."/>
            <person name="Lee G.-C."/>
            <person name="Liaw Y.-C."/>
            <person name="Huang T.-H."/>
            <person name="Shaw J.-F."/>
        </authorList>
    </citation>
    <scope>REVIEW</scope>
</reference>
<reference key="8">
    <citation type="journal article" date="2008" name="Pak. J. Biol. Sci.">
        <title>Sequence analysis of GDSL lipase gene family in Arabidopsis thaliana.</title>
        <authorList>
            <person name="Ling H."/>
        </authorList>
    </citation>
    <scope>GENE FAMILY</scope>
</reference>
<reference key="9">
    <citation type="journal article" date="2008" name="Phytochemistry">
        <title>ESP and ESM1 mediate indol-3-acetonitrile production from indol-3-ylmethyl glucosinolate in Arabidopsis.</title>
        <authorList>
            <person name="Burow M."/>
            <person name="Zhang Z.-Y."/>
            <person name="Ober J.A."/>
            <person name="Lambrix V.M."/>
            <person name="Wittstock U."/>
            <person name="Gershenzon J."/>
            <person name="Kliebenstein D.J."/>
        </authorList>
    </citation>
    <scope>FUNCTION</scope>
</reference>
<keyword id="KW-0325">Glycoprotein</keyword>
<keyword id="KW-0378">Hydrolase</keyword>
<keyword id="KW-0442">Lipid degradation</keyword>
<keyword id="KW-0443">Lipid metabolism</keyword>
<keyword id="KW-1185">Reference proteome</keyword>
<keyword id="KW-0964">Secreted</keyword>
<keyword id="KW-0732">Signal</keyword>
<accession>Q9LJG3</accession>
<accession>A0MAV7</accession>
<accession>Q941A3</accession>
<sequence>MADNLNLVSVLGVLLVLTIFHNPIIVYAGEGVPNVALFTFGDSYYDAGNKVFLSQRKDLPQTYWPYGKSRDYPNGKFSDGHIVPDFIADFISIPNGVLPPVLKPGVDISRGVSFAVADASILGAPVESMTLNQQVVKFKNMKSNWNDSYIEKSLFMIYIGTEDYLNFTKANPNADASAQQAFVTNVINRLKNDIKLLYSLGASKFVVQLLAPLGCLPIVRQEYKTGNECYELLNDLAKQHNGKIGPMLNEFAKISTSPYGFQFTVFDFYNAVLRRIATGRSLNYRFFVTNTSCCGVGTHNAYGCGKGNVHSKLCEYQRSYFFFDGRHNTEKAQEEMAHLLYGADPDVVQPMTVRELIVYPTGETMREYWEPNNLAIRRRPSRDFYLGLAAYY</sequence>
<comment type="function">
    <text evidence="3 4">Represses or inhibits nitriles production from methionine-derived and from indol-3-ylmethyl glucosinolates. Favors isothiocyanate production.</text>
</comment>
<comment type="subcellular location">
    <subcellularLocation>
        <location evidence="5">Secreted</location>
    </subcellularLocation>
</comment>
<comment type="disruption phenotype">
    <text evidence="3">In cv. Columbia, altered ratio of endogenous nitrile to isothiocyanate hydrolysis products.</text>
</comment>
<comment type="miscellaneous">
    <text>ESM1 is highly expressed in cv. Columbia while lowly expressed in cv. Landsberg erecta.</text>
</comment>
<comment type="similarity">
    <text evidence="5">Belongs to the 'GDSL' lipolytic enzyme family.</text>
</comment>
<protein>
    <recommendedName>
        <fullName>GDSL esterase/lipase ESM1</fullName>
        <ecNumber>3.1.1.-</ecNumber>
    </recommendedName>
    <alternativeName>
        <fullName>Extracellular lipase ESM1</fullName>
    </alternativeName>
    <alternativeName>
        <fullName>Protein EPITHIOSPECIFIER MODIFIER 1</fullName>
        <shortName>AtESM1</shortName>
    </alternativeName>
</protein>
<evidence type="ECO:0000250" key="1"/>
<evidence type="ECO:0000255" key="2"/>
<evidence type="ECO:0000269" key="3">
    <source>
    </source>
</evidence>
<evidence type="ECO:0000269" key="4">
    <source>
    </source>
</evidence>
<evidence type="ECO:0000305" key="5"/>
<proteinExistence type="evidence at protein level"/>
<organism>
    <name type="scientific">Arabidopsis thaliana</name>
    <name type="common">Mouse-ear cress</name>
    <dbReference type="NCBI Taxonomy" id="3702"/>
    <lineage>
        <taxon>Eukaryota</taxon>
        <taxon>Viridiplantae</taxon>
        <taxon>Streptophyta</taxon>
        <taxon>Embryophyta</taxon>
        <taxon>Tracheophyta</taxon>
        <taxon>Spermatophyta</taxon>
        <taxon>Magnoliopsida</taxon>
        <taxon>eudicotyledons</taxon>
        <taxon>Gunneridae</taxon>
        <taxon>Pentapetalae</taxon>
        <taxon>rosids</taxon>
        <taxon>malvids</taxon>
        <taxon>Brassicales</taxon>
        <taxon>Brassicaceae</taxon>
        <taxon>Camelineae</taxon>
        <taxon>Arabidopsis</taxon>
    </lineage>
</organism>
<dbReference type="EC" id="3.1.1.-"/>
<dbReference type="EMBL" id="DQ288725">
    <property type="protein sequence ID" value="ABB90255.1"/>
    <property type="molecule type" value="Genomic_DNA"/>
</dbReference>
<dbReference type="EMBL" id="AP000600">
    <property type="protein sequence ID" value="BAB02989.1"/>
    <property type="molecule type" value="Genomic_DNA"/>
</dbReference>
<dbReference type="EMBL" id="CP002686">
    <property type="protein sequence ID" value="AEE75487.1"/>
    <property type="molecule type" value="Genomic_DNA"/>
</dbReference>
<dbReference type="EMBL" id="AY052318">
    <property type="protein sequence ID" value="AAK96511.1"/>
    <property type="molecule type" value="mRNA"/>
</dbReference>
<dbReference type="EMBL" id="AY054230">
    <property type="protein sequence ID" value="AAL06890.1"/>
    <property type="molecule type" value="mRNA"/>
</dbReference>
<dbReference type="EMBL" id="AY062690">
    <property type="protein sequence ID" value="AAL32768.1"/>
    <property type="molecule type" value="mRNA"/>
</dbReference>
<dbReference type="EMBL" id="AY113066">
    <property type="protein sequence ID" value="AAM47374.1"/>
    <property type="molecule type" value="mRNA"/>
</dbReference>
<dbReference type="EMBL" id="BT002522">
    <property type="protein sequence ID" value="AAO00882.1"/>
    <property type="molecule type" value="mRNA"/>
</dbReference>
<dbReference type="EMBL" id="BT008484">
    <property type="protein sequence ID" value="AAP37843.1"/>
    <property type="molecule type" value="mRNA"/>
</dbReference>
<dbReference type="EMBL" id="AK221834">
    <property type="protein sequence ID" value="BAD94063.1"/>
    <property type="molecule type" value="mRNA"/>
</dbReference>
<dbReference type="PIR" id="PA0034">
    <property type="entry name" value="PA0034"/>
</dbReference>
<dbReference type="RefSeq" id="NP_188037.1">
    <property type="nucleotide sequence ID" value="NM_112278.3"/>
</dbReference>
<dbReference type="SMR" id="Q9LJG3"/>
<dbReference type="BioGRID" id="5973">
    <property type="interactions" value="5"/>
</dbReference>
<dbReference type="FunCoup" id="Q9LJG3">
    <property type="interactions" value="80"/>
</dbReference>
<dbReference type="IntAct" id="Q9LJG3">
    <property type="interactions" value="1"/>
</dbReference>
<dbReference type="STRING" id="3702.Q9LJG3"/>
<dbReference type="GlyCosmos" id="Q9LJG3">
    <property type="glycosylation" value="3 sites, No reported glycans"/>
</dbReference>
<dbReference type="GlyGen" id="Q9LJG3">
    <property type="glycosylation" value="3 sites"/>
</dbReference>
<dbReference type="iPTMnet" id="Q9LJG3"/>
<dbReference type="MetOSite" id="Q9LJG3"/>
<dbReference type="PaxDb" id="3702-AT3G14210.1"/>
<dbReference type="ProteomicsDB" id="222291"/>
<dbReference type="EnsemblPlants" id="AT3G14210.1">
    <property type="protein sequence ID" value="AT3G14210.1"/>
    <property type="gene ID" value="AT3G14210"/>
</dbReference>
<dbReference type="GeneID" id="820639"/>
<dbReference type="Gramene" id="AT3G14210.1">
    <property type="protein sequence ID" value="AT3G14210.1"/>
    <property type="gene ID" value="AT3G14210"/>
</dbReference>
<dbReference type="KEGG" id="ath:AT3G14210"/>
<dbReference type="Araport" id="AT3G14210"/>
<dbReference type="TAIR" id="AT3G14210">
    <property type="gene designation" value="ESM1"/>
</dbReference>
<dbReference type="eggNOG" id="ENOG502S4IX">
    <property type="taxonomic scope" value="Eukaryota"/>
</dbReference>
<dbReference type="HOGENOM" id="CLU_015101_7_0_1"/>
<dbReference type="InParanoid" id="Q9LJG3"/>
<dbReference type="OMA" id="EYWEPNK"/>
<dbReference type="PhylomeDB" id="Q9LJG3"/>
<dbReference type="CD-CODE" id="4299E36E">
    <property type="entry name" value="Nucleolus"/>
</dbReference>
<dbReference type="PRO" id="PR:Q9LJG3"/>
<dbReference type="Proteomes" id="UP000006548">
    <property type="component" value="Chromosome 3"/>
</dbReference>
<dbReference type="ExpressionAtlas" id="Q9LJG3">
    <property type="expression patterns" value="baseline and differential"/>
</dbReference>
<dbReference type="GO" id="GO:0048046">
    <property type="term" value="C:apoplast"/>
    <property type="evidence" value="ECO:0007005"/>
    <property type="project" value="TAIR"/>
</dbReference>
<dbReference type="GO" id="GO:0009507">
    <property type="term" value="C:chloroplast"/>
    <property type="evidence" value="ECO:0007005"/>
    <property type="project" value="TAIR"/>
</dbReference>
<dbReference type="GO" id="GO:0009941">
    <property type="term" value="C:chloroplast envelope"/>
    <property type="evidence" value="ECO:0007005"/>
    <property type="project" value="TAIR"/>
</dbReference>
<dbReference type="GO" id="GO:0005829">
    <property type="term" value="C:cytosol"/>
    <property type="evidence" value="ECO:0007005"/>
    <property type="project" value="TAIR"/>
</dbReference>
<dbReference type="GO" id="GO:0022626">
    <property type="term" value="C:cytosolic ribosome"/>
    <property type="evidence" value="ECO:0007005"/>
    <property type="project" value="TAIR"/>
</dbReference>
<dbReference type="GO" id="GO:0005634">
    <property type="term" value="C:nucleus"/>
    <property type="evidence" value="ECO:0007005"/>
    <property type="project" value="TAIR"/>
</dbReference>
<dbReference type="GO" id="GO:0005777">
    <property type="term" value="C:peroxisome"/>
    <property type="evidence" value="ECO:0007005"/>
    <property type="project" value="TAIR"/>
</dbReference>
<dbReference type="GO" id="GO:0000325">
    <property type="term" value="C:plant-type vacuole"/>
    <property type="evidence" value="ECO:0007005"/>
    <property type="project" value="TAIR"/>
</dbReference>
<dbReference type="GO" id="GO:0009506">
    <property type="term" value="C:plasmodesma"/>
    <property type="evidence" value="ECO:0007005"/>
    <property type="project" value="TAIR"/>
</dbReference>
<dbReference type="GO" id="GO:0099503">
    <property type="term" value="C:secretory vesicle"/>
    <property type="evidence" value="ECO:0007005"/>
    <property type="project" value="TAIR"/>
</dbReference>
<dbReference type="GO" id="GO:0016788">
    <property type="term" value="F:hydrolase activity, acting on ester bonds"/>
    <property type="evidence" value="ECO:0007669"/>
    <property type="project" value="InterPro"/>
</dbReference>
<dbReference type="GO" id="GO:0019762">
    <property type="term" value="P:glucosinolate catabolic process"/>
    <property type="evidence" value="ECO:0000314"/>
    <property type="project" value="TAIR"/>
</dbReference>
<dbReference type="GO" id="GO:0016042">
    <property type="term" value="P:lipid catabolic process"/>
    <property type="evidence" value="ECO:0007669"/>
    <property type="project" value="UniProtKB-KW"/>
</dbReference>
<dbReference type="GO" id="GO:0009625">
    <property type="term" value="P:response to insect"/>
    <property type="evidence" value="ECO:0000315"/>
    <property type="project" value="TAIR"/>
</dbReference>
<dbReference type="CDD" id="cd01837">
    <property type="entry name" value="SGNH_plant_lipase_like"/>
    <property type="match status" value="1"/>
</dbReference>
<dbReference type="FunFam" id="3.40.50.1110:FF:000026">
    <property type="entry name" value="GDSL esterase/lipase At3g14220"/>
    <property type="match status" value="1"/>
</dbReference>
<dbReference type="Gene3D" id="3.40.50.1110">
    <property type="entry name" value="SGNH hydrolase"/>
    <property type="match status" value="1"/>
</dbReference>
<dbReference type="InterPro" id="IPR001087">
    <property type="entry name" value="GDSL"/>
</dbReference>
<dbReference type="InterPro" id="IPR044552">
    <property type="entry name" value="GLIP1-5/GLL25"/>
</dbReference>
<dbReference type="InterPro" id="IPR036514">
    <property type="entry name" value="SGNH_hydro_sf"/>
</dbReference>
<dbReference type="InterPro" id="IPR035669">
    <property type="entry name" value="SGNH_plant_lipase-like"/>
</dbReference>
<dbReference type="PANTHER" id="PTHR45966">
    <property type="entry name" value="GDSL-LIKE LIPASE/ACYLHYDROLASE"/>
    <property type="match status" value="1"/>
</dbReference>
<dbReference type="PANTHER" id="PTHR45966:SF36">
    <property type="entry name" value="INACTIVE GDSL ESTERASE_LIPASE-LIKE PROTEIN 25"/>
    <property type="match status" value="1"/>
</dbReference>
<dbReference type="Pfam" id="PF00657">
    <property type="entry name" value="Lipase_GDSL"/>
    <property type="match status" value="1"/>
</dbReference>
<dbReference type="SUPFAM" id="SSF52266">
    <property type="entry name" value="SGNH hydrolase"/>
    <property type="match status" value="1"/>
</dbReference>